<proteinExistence type="inferred from homology"/>
<keyword id="KW-0004">4Fe-4S</keyword>
<keyword id="KW-0963">Cytoplasm</keyword>
<keyword id="KW-0408">Iron</keyword>
<keyword id="KW-0411">Iron-sulfur</keyword>
<keyword id="KW-0479">Metal-binding</keyword>
<keyword id="KW-0662">Pyridine nucleotide biosynthesis</keyword>
<keyword id="KW-0808">Transferase</keyword>
<evidence type="ECO:0000255" key="1">
    <source>
        <dbReference type="HAMAP-Rule" id="MF_00569"/>
    </source>
</evidence>
<name>NADA_ANOFW</name>
<sequence length="367" mass="41372">MNVLQLMQQHDTMPETYKRLSVEEMEKRVARVKRELGTRLFIPGHHYQKDEVIQFADATGDSLQLAQVAAKNKEAEYIVFCGVHFMAETADILTSDEQIVILPDMRAGCSMADMAEIEQVERAWPILQQLFGDTILPLTYVNSTAAIKAFVGVHGGATVTSSNAKKMVAWAFTQKERIFFLPDQHLGRNTAYDLGVPLEQMAVWDPITNTLQYEGDVQQIKVILWKGHCSVHENFTVKHIEHIRKTKPDMKIIVHPECSWEVVQQADDAGSTKYIIETIANAPAGSKWAIGTEMNLVNRIIQQHPDKEIVSLNPYMCPCLTMNRIDLPHLLWALESLLEGKVVNRITVPKDVAEGAMLALERMLARA</sequence>
<feature type="chain" id="PRO_1000129450" description="Quinolinate synthase">
    <location>
        <begin position="1"/>
        <end position="367"/>
    </location>
</feature>
<feature type="binding site" evidence="1">
    <location>
        <position position="45"/>
    </location>
    <ligand>
        <name>iminosuccinate</name>
        <dbReference type="ChEBI" id="CHEBI:77875"/>
    </ligand>
</feature>
<feature type="binding site" evidence="1">
    <location>
        <position position="62"/>
    </location>
    <ligand>
        <name>iminosuccinate</name>
        <dbReference type="ChEBI" id="CHEBI:77875"/>
    </ligand>
</feature>
<feature type="binding site" evidence="1">
    <location>
        <position position="109"/>
    </location>
    <ligand>
        <name>[4Fe-4S] cluster</name>
        <dbReference type="ChEBI" id="CHEBI:49883"/>
    </ligand>
</feature>
<feature type="binding site" evidence="1">
    <location>
        <begin position="140"/>
        <end position="142"/>
    </location>
    <ligand>
        <name>iminosuccinate</name>
        <dbReference type="ChEBI" id="CHEBI:77875"/>
    </ligand>
</feature>
<feature type="binding site" evidence="1">
    <location>
        <position position="161"/>
    </location>
    <ligand>
        <name>iminosuccinate</name>
        <dbReference type="ChEBI" id="CHEBI:77875"/>
    </ligand>
</feature>
<feature type="binding site" evidence="1">
    <location>
        <position position="229"/>
    </location>
    <ligand>
        <name>[4Fe-4S] cluster</name>
        <dbReference type="ChEBI" id="CHEBI:49883"/>
    </ligand>
</feature>
<feature type="binding site" evidence="1">
    <location>
        <begin position="255"/>
        <end position="257"/>
    </location>
    <ligand>
        <name>iminosuccinate</name>
        <dbReference type="ChEBI" id="CHEBI:77875"/>
    </ligand>
</feature>
<feature type="binding site" evidence="1">
    <location>
        <position position="272"/>
    </location>
    <ligand>
        <name>iminosuccinate</name>
        <dbReference type="ChEBI" id="CHEBI:77875"/>
    </ligand>
</feature>
<feature type="binding site" evidence="1">
    <location>
        <position position="319"/>
    </location>
    <ligand>
        <name>[4Fe-4S] cluster</name>
        <dbReference type="ChEBI" id="CHEBI:49883"/>
    </ligand>
</feature>
<dbReference type="EC" id="2.5.1.72" evidence="1"/>
<dbReference type="EMBL" id="CP000922">
    <property type="protein sequence ID" value="ACJ33084.1"/>
    <property type="molecule type" value="Genomic_DNA"/>
</dbReference>
<dbReference type="RefSeq" id="WP_012574387.1">
    <property type="nucleotide sequence ID" value="NC_011567.1"/>
</dbReference>
<dbReference type="SMR" id="B7GIR9"/>
<dbReference type="STRING" id="491915.Aflv_0705"/>
<dbReference type="GeneID" id="7036962"/>
<dbReference type="KEGG" id="afl:Aflv_0705"/>
<dbReference type="PATRIC" id="fig|491915.6.peg.721"/>
<dbReference type="eggNOG" id="COG0379">
    <property type="taxonomic scope" value="Bacteria"/>
</dbReference>
<dbReference type="HOGENOM" id="CLU_047382_2_0_9"/>
<dbReference type="UniPathway" id="UPA00253">
    <property type="reaction ID" value="UER00327"/>
</dbReference>
<dbReference type="Proteomes" id="UP000000742">
    <property type="component" value="Chromosome"/>
</dbReference>
<dbReference type="GO" id="GO:0005829">
    <property type="term" value="C:cytosol"/>
    <property type="evidence" value="ECO:0007669"/>
    <property type="project" value="TreeGrafter"/>
</dbReference>
<dbReference type="GO" id="GO:0051539">
    <property type="term" value="F:4 iron, 4 sulfur cluster binding"/>
    <property type="evidence" value="ECO:0007669"/>
    <property type="project" value="UniProtKB-KW"/>
</dbReference>
<dbReference type="GO" id="GO:0046872">
    <property type="term" value="F:metal ion binding"/>
    <property type="evidence" value="ECO:0007669"/>
    <property type="project" value="UniProtKB-KW"/>
</dbReference>
<dbReference type="GO" id="GO:0008987">
    <property type="term" value="F:quinolinate synthetase A activity"/>
    <property type="evidence" value="ECO:0007669"/>
    <property type="project" value="UniProtKB-UniRule"/>
</dbReference>
<dbReference type="GO" id="GO:0034628">
    <property type="term" value="P:'de novo' NAD biosynthetic process from L-aspartate"/>
    <property type="evidence" value="ECO:0007669"/>
    <property type="project" value="TreeGrafter"/>
</dbReference>
<dbReference type="FunFam" id="3.40.50.10800:FF:000001">
    <property type="entry name" value="Quinolinate synthase A"/>
    <property type="match status" value="1"/>
</dbReference>
<dbReference type="Gene3D" id="3.40.50.10800">
    <property type="entry name" value="NadA-like"/>
    <property type="match status" value="3"/>
</dbReference>
<dbReference type="HAMAP" id="MF_00569">
    <property type="entry name" value="NadA_type3"/>
    <property type="match status" value="1"/>
</dbReference>
<dbReference type="InterPro" id="IPR003473">
    <property type="entry name" value="NadA"/>
</dbReference>
<dbReference type="InterPro" id="IPR036094">
    <property type="entry name" value="NadA_sf"/>
</dbReference>
<dbReference type="InterPro" id="IPR023515">
    <property type="entry name" value="Quinolinate_synth_A_type3"/>
</dbReference>
<dbReference type="NCBIfam" id="TIGR00550">
    <property type="entry name" value="nadA"/>
    <property type="match status" value="1"/>
</dbReference>
<dbReference type="NCBIfam" id="NF006880">
    <property type="entry name" value="PRK09375.2-1"/>
    <property type="match status" value="1"/>
</dbReference>
<dbReference type="NCBIfam" id="NF006883">
    <property type="entry name" value="PRK09375.2-4"/>
    <property type="match status" value="1"/>
</dbReference>
<dbReference type="PANTHER" id="PTHR30573:SF0">
    <property type="entry name" value="QUINOLINATE SYNTHASE, CHLOROPLASTIC"/>
    <property type="match status" value="1"/>
</dbReference>
<dbReference type="PANTHER" id="PTHR30573">
    <property type="entry name" value="QUINOLINATE SYNTHETASE A"/>
    <property type="match status" value="1"/>
</dbReference>
<dbReference type="Pfam" id="PF02445">
    <property type="entry name" value="NadA"/>
    <property type="match status" value="1"/>
</dbReference>
<dbReference type="SUPFAM" id="SSF142754">
    <property type="entry name" value="NadA-like"/>
    <property type="match status" value="1"/>
</dbReference>
<comment type="function">
    <text evidence="1">Catalyzes the condensation of iminoaspartate with dihydroxyacetone phosphate to form quinolinate.</text>
</comment>
<comment type="catalytic activity">
    <reaction evidence="1">
        <text>iminosuccinate + dihydroxyacetone phosphate = quinolinate + phosphate + 2 H2O + H(+)</text>
        <dbReference type="Rhea" id="RHEA:25888"/>
        <dbReference type="ChEBI" id="CHEBI:15377"/>
        <dbReference type="ChEBI" id="CHEBI:15378"/>
        <dbReference type="ChEBI" id="CHEBI:29959"/>
        <dbReference type="ChEBI" id="CHEBI:43474"/>
        <dbReference type="ChEBI" id="CHEBI:57642"/>
        <dbReference type="ChEBI" id="CHEBI:77875"/>
        <dbReference type="EC" id="2.5.1.72"/>
    </reaction>
    <physiologicalReaction direction="left-to-right" evidence="1">
        <dbReference type="Rhea" id="RHEA:25889"/>
    </physiologicalReaction>
</comment>
<comment type="cofactor">
    <cofactor evidence="1">
        <name>[4Fe-4S] cluster</name>
        <dbReference type="ChEBI" id="CHEBI:49883"/>
    </cofactor>
    <text evidence="1">Binds 1 [4Fe-4S] cluster per subunit.</text>
</comment>
<comment type="pathway">
    <text evidence="1">Cofactor biosynthesis; NAD(+) biosynthesis; quinolinate from iminoaspartate: step 1/1.</text>
</comment>
<comment type="subcellular location">
    <subcellularLocation>
        <location evidence="1">Cytoplasm</location>
    </subcellularLocation>
</comment>
<comment type="similarity">
    <text evidence="1">Belongs to the quinolinate synthase family. Type 3 subfamily.</text>
</comment>
<gene>
    <name evidence="1" type="primary">nadA</name>
    <name type="ordered locus">Aflv_0705</name>
</gene>
<protein>
    <recommendedName>
        <fullName evidence="1">Quinolinate synthase</fullName>
        <ecNumber evidence="1">2.5.1.72</ecNumber>
    </recommendedName>
</protein>
<reference key="1">
    <citation type="journal article" date="2008" name="Genome Biol.">
        <title>Encapsulated in silica: genome, proteome and physiology of the thermophilic bacterium Anoxybacillus flavithermus WK1.</title>
        <authorList>
            <person name="Saw J.H."/>
            <person name="Mountain B.W."/>
            <person name="Feng L."/>
            <person name="Omelchenko M.V."/>
            <person name="Hou S."/>
            <person name="Saito J.A."/>
            <person name="Stott M.B."/>
            <person name="Li D."/>
            <person name="Zhao G."/>
            <person name="Wu J."/>
            <person name="Galperin M.Y."/>
            <person name="Koonin E.V."/>
            <person name="Makarova K.S."/>
            <person name="Wolf Y.I."/>
            <person name="Rigden D.J."/>
            <person name="Dunfield P.F."/>
            <person name="Wang L."/>
            <person name="Alam M."/>
        </authorList>
    </citation>
    <scope>NUCLEOTIDE SEQUENCE [LARGE SCALE GENOMIC DNA]</scope>
    <source>
        <strain>DSM 21510 / WK1</strain>
    </source>
</reference>
<organism>
    <name type="scientific">Anoxybacillus flavithermus (strain DSM 21510 / WK1)</name>
    <dbReference type="NCBI Taxonomy" id="491915"/>
    <lineage>
        <taxon>Bacteria</taxon>
        <taxon>Bacillati</taxon>
        <taxon>Bacillota</taxon>
        <taxon>Bacilli</taxon>
        <taxon>Bacillales</taxon>
        <taxon>Anoxybacillaceae</taxon>
        <taxon>Anoxybacillus</taxon>
    </lineage>
</organism>
<accession>B7GIR9</accession>